<evidence type="ECO:0000255" key="1">
    <source>
        <dbReference type="HAMAP-Rule" id="MF_01389"/>
    </source>
</evidence>
<gene>
    <name evidence="1" type="primary">ureG</name>
    <name type="ordered locus">ROP_57420</name>
</gene>
<name>UREG_RHOOB</name>
<reference key="1">
    <citation type="submission" date="2009-03" db="EMBL/GenBank/DDBJ databases">
        <title>Comparison of the complete genome sequences of Rhodococcus erythropolis PR4 and Rhodococcus opacus B4.</title>
        <authorList>
            <person name="Takarada H."/>
            <person name="Sekine M."/>
            <person name="Hosoyama A."/>
            <person name="Yamada R."/>
            <person name="Fujisawa T."/>
            <person name="Omata S."/>
            <person name="Shimizu A."/>
            <person name="Tsukatani N."/>
            <person name="Tanikawa S."/>
            <person name="Fujita N."/>
            <person name="Harayama S."/>
        </authorList>
    </citation>
    <scope>NUCLEOTIDE SEQUENCE [LARGE SCALE GENOMIC DNA]</scope>
    <source>
        <strain>B4</strain>
    </source>
</reference>
<feature type="chain" id="PRO_1000184268" description="Urease accessory protein UreG">
    <location>
        <begin position="1"/>
        <end position="228"/>
    </location>
</feature>
<feature type="binding site" evidence="1">
    <location>
        <begin position="34"/>
        <end position="41"/>
    </location>
    <ligand>
        <name>GTP</name>
        <dbReference type="ChEBI" id="CHEBI:37565"/>
    </ligand>
</feature>
<sequence>MPPHFIDGEPHDHHHDRPRRVRVAGEPVRIGIGGPVGSGKTALVAALCRQLREELSLAVLTNDIYTTEDADFLRRHAVLPDERIAAVQTGGCPHTAIRDDITANLDAIDDLIAANPPLDLILVESGGDNLTATFSSGLIDVQIFVVDVAGGDKVPRKGGPGVTFSDLLVINKTDLAPMVGADLAVMRRDAEQVREGRPTALISLTEDPSSGPALAWVREQVRILADVH</sequence>
<protein>
    <recommendedName>
        <fullName evidence="1">Urease accessory protein UreG</fullName>
    </recommendedName>
</protein>
<accession>C1AXZ4</accession>
<proteinExistence type="inferred from homology"/>
<comment type="function">
    <text evidence="1">Facilitates the functional incorporation of the urease nickel metallocenter. This process requires GTP hydrolysis, probably effectuated by UreG.</text>
</comment>
<comment type="subunit">
    <text evidence="1">Homodimer. UreD, UreF and UreG form a complex that acts as a GTP-hydrolysis-dependent molecular chaperone, activating the urease apoprotein by helping to assemble the nickel containing metallocenter of UreC. The UreE protein probably delivers the nickel.</text>
</comment>
<comment type="subcellular location">
    <subcellularLocation>
        <location evidence="1">Cytoplasm</location>
    </subcellularLocation>
</comment>
<comment type="similarity">
    <text evidence="1">Belongs to the SIMIBI class G3E GTPase family. UreG subfamily.</text>
</comment>
<organism>
    <name type="scientific">Rhodococcus opacus (strain B4)</name>
    <dbReference type="NCBI Taxonomy" id="632772"/>
    <lineage>
        <taxon>Bacteria</taxon>
        <taxon>Bacillati</taxon>
        <taxon>Actinomycetota</taxon>
        <taxon>Actinomycetes</taxon>
        <taxon>Mycobacteriales</taxon>
        <taxon>Nocardiaceae</taxon>
        <taxon>Rhodococcus</taxon>
    </lineage>
</organism>
<keyword id="KW-0143">Chaperone</keyword>
<keyword id="KW-0963">Cytoplasm</keyword>
<keyword id="KW-0342">GTP-binding</keyword>
<keyword id="KW-0996">Nickel insertion</keyword>
<keyword id="KW-0547">Nucleotide-binding</keyword>
<dbReference type="EMBL" id="AP011115">
    <property type="protein sequence ID" value="BAH53989.1"/>
    <property type="molecule type" value="Genomic_DNA"/>
</dbReference>
<dbReference type="RefSeq" id="WP_015889483.1">
    <property type="nucleotide sequence ID" value="NC_012522.1"/>
</dbReference>
<dbReference type="SMR" id="C1AXZ4"/>
<dbReference type="STRING" id="632772.ROP_57420"/>
<dbReference type="KEGG" id="rop:ROP_57420"/>
<dbReference type="PATRIC" id="fig|632772.20.peg.5996"/>
<dbReference type="HOGENOM" id="CLU_072144_1_0_11"/>
<dbReference type="OrthoDB" id="9802035at2"/>
<dbReference type="Proteomes" id="UP000002212">
    <property type="component" value="Chromosome"/>
</dbReference>
<dbReference type="GO" id="GO:0005737">
    <property type="term" value="C:cytoplasm"/>
    <property type="evidence" value="ECO:0007669"/>
    <property type="project" value="UniProtKB-SubCell"/>
</dbReference>
<dbReference type="GO" id="GO:0005525">
    <property type="term" value="F:GTP binding"/>
    <property type="evidence" value="ECO:0007669"/>
    <property type="project" value="UniProtKB-KW"/>
</dbReference>
<dbReference type="GO" id="GO:0003924">
    <property type="term" value="F:GTPase activity"/>
    <property type="evidence" value="ECO:0007669"/>
    <property type="project" value="InterPro"/>
</dbReference>
<dbReference type="GO" id="GO:0016151">
    <property type="term" value="F:nickel cation binding"/>
    <property type="evidence" value="ECO:0007669"/>
    <property type="project" value="UniProtKB-UniRule"/>
</dbReference>
<dbReference type="GO" id="GO:0043419">
    <property type="term" value="P:urea catabolic process"/>
    <property type="evidence" value="ECO:0007669"/>
    <property type="project" value="InterPro"/>
</dbReference>
<dbReference type="CDD" id="cd05540">
    <property type="entry name" value="UreG"/>
    <property type="match status" value="1"/>
</dbReference>
<dbReference type="FunFam" id="3.40.50.300:FF:000208">
    <property type="entry name" value="Urease accessory protein UreG"/>
    <property type="match status" value="1"/>
</dbReference>
<dbReference type="Gene3D" id="3.40.50.300">
    <property type="entry name" value="P-loop containing nucleotide triphosphate hydrolases"/>
    <property type="match status" value="1"/>
</dbReference>
<dbReference type="HAMAP" id="MF_01389">
    <property type="entry name" value="UreG"/>
    <property type="match status" value="1"/>
</dbReference>
<dbReference type="InterPro" id="IPR003495">
    <property type="entry name" value="CobW/HypB/UreG_nucleotide-bd"/>
</dbReference>
<dbReference type="InterPro" id="IPR027417">
    <property type="entry name" value="P-loop_NTPase"/>
</dbReference>
<dbReference type="InterPro" id="IPR004400">
    <property type="entry name" value="UreG"/>
</dbReference>
<dbReference type="NCBIfam" id="TIGR00101">
    <property type="entry name" value="ureG"/>
    <property type="match status" value="1"/>
</dbReference>
<dbReference type="PANTHER" id="PTHR31715">
    <property type="entry name" value="UREASE ACCESSORY PROTEIN G"/>
    <property type="match status" value="1"/>
</dbReference>
<dbReference type="PANTHER" id="PTHR31715:SF0">
    <property type="entry name" value="UREASE ACCESSORY PROTEIN G"/>
    <property type="match status" value="1"/>
</dbReference>
<dbReference type="Pfam" id="PF02492">
    <property type="entry name" value="cobW"/>
    <property type="match status" value="1"/>
</dbReference>
<dbReference type="PIRSF" id="PIRSF005624">
    <property type="entry name" value="Ni-bind_GTPase"/>
    <property type="match status" value="1"/>
</dbReference>
<dbReference type="SUPFAM" id="SSF52540">
    <property type="entry name" value="P-loop containing nucleoside triphosphate hydrolases"/>
    <property type="match status" value="1"/>
</dbReference>